<accession>Q3BAN3</accession>
<keyword id="KW-0067">ATP-binding</keyword>
<keyword id="KW-0150">Chloroplast</keyword>
<keyword id="KW-0275">Fatty acid biosynthesis</keyword>
<keyword id="KW-0276">Fatty acid metabolism</keyword>
<keyword id="KW-0444">Lipid biosynthesis</keyword>
<keyword id="KW-0443">Lipid metabolism</keyword>
<keyword id="KW-0479">Metal-binding</keyword>
<keyword id="KW-0547">Nucleotide-binding</keyword>
<keyword id="KW-0934">Plastid</keyword>
<keyword id="KW-0808">Transferase</keyword>
<keyword id="KW-0862">Zinc</keyword>
<keyword id="KW-0863">Zinc-finger</keyword>
<feature type="chain" id="PRO_0000359160" description="Acetyl-coenzyme A carboxylase carboxyl transferase subunit beta, chloroplastic">
    <location>
        <begin position="1"/>
        <end position="497"/>
    </location>
</feature>
<feature type="domain" description="CoA carboxyltransferase N-terminal" evidence="3">
    <location>
        <begin position="225"/>
        <end position="497"/>
    </location>
</feature>
<feature type="zinc finger region" description="C4-type" evidence="2">
    <location>
        <begin position="229"/>
        <end position="251"/>
    </location>
</feature>
<feature type="binding site" evidence="2">
    <location>
        <position position="229"/>
    </location>
    <ligand>
        <name>Zn(2+)</name>
        <dbReference type="ChEBI" id="CHEBI:29105"/>
    </ligand>
</feature>
<feature type="binding site" evidence="2">
    <location>
        <position position="232"/>
    </location>
    <ligand>
        <name>Zn(2+)</name>
        <dbReference type="ChEBI" id="CHEBI:29105"/>
    </ligand>
</feature>
<feature type="binding site" evidence="2">
    <location>
        <position position="248"/>
    </location>
    <ligand>
        <name>Zn(2+)</name>
        <dbReference type="ChEBI" id="CHEBI:29105"/>
    </ligand>
</feature>
<feature type="binding site" evidence="2">
    <location>
        <position position="251"/>
    </location>
    <ligand>
        <name>Zn(2+)</name>
        <dbReference type="ChEBI" id="CHEBI:29105"/>
    </ligand>
</feature>
<gene>
    <name evidence="2" type="primary">accD</name>
</gene>
<geneLocation type="chloroplast"/>
<sequence length="497" mass="56240">MKKYWFNSMLSNKKLEQKCGLSKSMDGLDALGHTSGSEETIRKDADKKIPSWDSYSFSNIHYLNSLFDRRNLWSLISDHTFLVRNSNGDTYSVYFDIENQIFDIDNASSFLSELPSYLKSGSNNSNYYYSYYSMYDTQSNWNNHINSCIDSYLRFEISLNSDIYSDIDSYISSFICTESTSSIENCTESTSSIENGNSSIKTSSSYFNRIEKSNDFDLNTKYKQLWVQCENCYGLNYKKFFSSKMNICEYCGYHLKMSSSDRIELFIDPGTWEPMDEDMVSIDPIEFHSIDPIEFHSEEEPYIDRISFYQTKTGLTEAVQTGVGQLNSIPIAIGVMDFQFMGGSMGSVVGEKITRLIEYATNRSLPVIIVCASGGARMQEGALSLMQMAKISSASYDYQSNKKLFFVSILTSPTTGGVTASFGMLGDIIIAEPNAYIAFAGKRVIEQTLKKTVPDGLQVAEYLFHKGLFDPIVPRNPLKGVLNELFQLHGFLPLNQD</sequence>
<comment type="function">
    <text evidence="2">Component of the acetyl coenzyme A carboxylase (ACC) complex. Biotin carboxylase (BC) catalyzes the carboxylation of biotin on its carrier protein (BCCP) and then the CO(2) group is transferred by the transcarboxylase to acetyl-CoA to form malonyl-CoA.</text>
</comment>
<comment type="catalytic activity">
    <reaction evidence="2">
        <text>N(6)-carboxybiotinyl-L-lysyl-[protein] + acetyl-CoA = N(6)-biotinyl-L-lysyl-[protein] + malonyl-CoA</text>
        <dbReference type="Rhea" id="RHEA:54728"/>
        <dbReference type="Rhea" id="RHEA-COMP:10505"/>
        <dbReference type="Rhea" id="RHEA-COMP:10506"/>
        <dbReference type="ChEBI" id="CHEBI:57288"/>
        <dbReference type="ChEBI" id="CHEBI:57384"/>
        <dbReference type="ChEBI" id="CHEBI:83144"/>
        <dbReference type="ChEBI" id="CHEBI:83145"/>
        <dbReference type="EC" id="2.1.3.15"/>
    </reaction>
</comment>
<comment type="cofactor">
    <cofactor evidence="2">
        <name>Zn(2+)</name>
        <dbReference type="ChEBI" id="CHEBI:29105"/>
    </cofactor>
    <text evidence="2">Binds 1 zinc ion per subunit.</text>
</comment>
<comment type="pathway">
    <text evidence="2">Lipid metabolism; malonyl-CoA biosynthesis; malonyl-CoA from acetyl-CoA: step 1/1.</text>
</comment>
<comment type="subunit">
    <text evidence="1">Acetyl-CoA carboxylase is a heterohexamer composed of biotin carboxyl carrier protein, biotin carboxylase and 2 subunits each of ACCase subunit alpha and ACCase plastid-coded subunit beta (accD).</text>
</comment>
<comment type="subcellular location">
    <subcellularLocation>
        <location evidence="2">Plastid</location>
        <location evidence="2">Chloroplast stroma</location>
    </subcellularLocation>
</comment>
<comment type="similarity">
    <text evidence="2">Belongs to the AccD/PCCB family.</text>
</comment>
<proteinExistence type="inferred from homology"/>
<evidence type="ECO:0000250" key="1"/>
<evidence type="ECO:0000255" key="2">
    <source>
        <dbReference type="HAMAP-Rule" id="MF_01395"/>
    </source>
</evidence>
<evidence type="ECO:0000255" key="3">
    <source>
        <dbReference type="PROSITE-ProRule" id="PRU01136"/>
    </source>
</evidence>
<reference key="1">
    <citation type="journal article" date="2006" name="Mol. Biol. Evol.">
        <title>The chloroplast genome of Phalaenopsis aphrodite (Orchidaceae): comparative analysis of evolutionary rate with that of grasses and its phylogenetic implications.</title>
        <authorList>
            <person name="Chang C.-C."/>
            <person name="Lin H.-C."/>
            <person name="Lin I.-P."/>
            <person name="Chow T.-Y."/>
            <person name="Chen H.-H."/>
            <person name="Chen W.-H."/>
            <person name="Cheng C.-H."/>
            <person name="Lin C.-Y."/>
            <person name="Liu S.-M."/>
            <person name="Chang C.-C."/>
            <person name="Chaw S.-M."/>
        </authorList>
    </citation>
    <scope>NUCLEOTIDE SEQUENCE [LARGE SCALE GENOMIC DNA]</scope>
    <source>
        <strain>cv. Taisugar TS-97</strain>
    </source>
</reference>
<organism>
    <name type="scientific">Phalaenopsis aphrodite subsp. formosana</name>
    <name type="common">Moth orchid</name>
    <dbReference type="NCBI Taxonomy" id="308872"/>
    <lineage>
        <taxon>Eukaryota</taxon>
        <taxon>Viridiplantae</taxon>
        <taxon>Streptophyta</taxon>
        <taxon>Embryophyta</taxon>
        <taxon>Tracheophyta</taxon>
        <taxon>Spermatophyta</taxon>
        <taxon>Magnoliopsida</taxon>
        <taxon>Liliopsida</taxon>
        <taxon>Asparagales</taxon>
        <taxon>Orchidaceae</taxon>
        <taxon>Epidendroideae</taxon>
        <taxon>Vandeae</taxon>
        <taxon>Aeridinae</taxon>
        <taxon>Phalaenopsis</taxon>
    </lineage>
</organism>
<protein>
    <recommendedName>
        <fullName evidence="2">Acetyl-coenzyme A carboxylase carboxyl transferase subunit beta, chloroplastic</fullName>
        <shortName evidence="2">ACCase subunit beta</shortName>
        <shortName evidence="2">Acetyl-CoA carboxylase carboxyltransferase subunit beta</shortName>
        <ecNumber evidence="2">2.1.3.15</ecNumber>
    </recommendedName>
</protein>
<dbReference type="EC" id="2.1.3.15" evidence="2"/>
<dbReference type="EMBL" id="AY916449">
    <property type="protein sequence ID" value="AAW82509.1"/>
    <property type="molecule type" value="Genomic_DNA"/>
</dbReference>
<dbReference type="RefSeq" id="YP_358585.1">
    <property type="nucleotide sequence ID" value="NC_007499.1"/>
</dbReference>
<dbReference type="SMR" id="Q3BAN3"/>
<dbReference type="GeneID" id="3741688"/>
<dbReference type="UniPathway" id="UPA00655">
    <property type="reaction ID" value="UER00711"/>
</dbReference>
<dbReference type="GO" id="GO:0009317">
    <property type="term" value="C:acetyl-CoA carboxylase complex"/>
    <property type="evidence" value="ECO:0007669"/>
    <property type="project" value="InterPro"/>
</dbReference>
<dbReference type="GO" id="GO:0009570">
    <property type="term" value="C:chloroplast stroma"/>
    <property type="evidence" value="ECO:0007669"/>
    <property type="project" value="UniProtKB-SubCell"/>
</dbReference>
<dbReference type="GO" id="GO:0003989">
    <property type="term" value="F:acetyl-CoA carboxylase activity"/>
    <property type="evidence" value="ECO:0007669"/>
    <property type="project" value="InterPro"/>
</dbReference>
<dbReference type="GO" id="GO:0005524">
    <property type="term" value="F:ATP binding"/>
    <property type="evidence" value="ECO:0007669"/>
    <property type="project" value="UniProtKB-KW"/>
</dbReference>
<dbReference type="GO" id="GO:0016743">
    <property type="term" value="F:carboxyl- or carbamoyltransferase activity"/>
    <property type="evidence" value="ECO:0007669"/>
    <property type="project" value="UniProtKB-UniRule"/>
</dbReference>
<dbReference type="GO" id="GO:0008270">
    <property type="term" value="F:zinc ion binding"/>
    <property type="evidence" value="ECO:0007669"/>
    <property type="project" value="UniProtKB-UniRule"/>
</dbReference>
<dbReference type="GO" id="GO:0006633">
    <property type="term" value="P:fatty acid biosynthetic process"/>
    <property type="evidence" value="ECO:0007669"/>
    <property type="project" value="UniProtKB-KW"/>
</dbReference>
<dbReference type="GO" id="GO:2001295">
    <property type="term" value="P:malonyl-CoA biosynthetic process"/>
    <property type="evidence" value="ECO:0007669"/>
    <property type="project" value="UniProtKB-UniRule"/>
</dbReference>
<dbReference type="Gene3D" id="3.90.226.10">
    <property type="entry name" value="2-enoyl-CoA Hydratase, Chain A, domain 1"/>
    <property type="match status" value="1"/>
</dbReference>
<dbReference type="HAMAP" id="MF_01395">
    <property type="entry name" value="AcetylCoA_CT_beta"/>
    <property type="match status" value="1"/>
</dbReference>
<dbReference type="InterPro" id="IPR034733">
    <property type="entry name" value="AcCoA_carboxyl_beta"/>
</dbReference>
<dbReference type="InterPro" id="IPR000438">
    <property type="entry name" value="Acetyl_CoA_COase_Trfase_b_su"/>
</dbReference>
<dbReference type="InterPro" id="IPR029045">
    <property type="entry name" value="ClpP/crotonase-like_dom_sf"/>
</dbReference>
<dbReference type="InterPro" id="IPR011762">
    <property type="entry name" value="COA_CT_N"/>
</dbReference>
<dbReference type="NCBIfam" id="TIGR00515">
    <property type="entry name" value="accD"/>
    <property type="match status" value="1"/>
</dbReference>
<dbReference type="PANTHER" id="PTHR42995">
    <property type="entry name" value="ACETYL-COENZYME A CARBOXYLASE CARBOXYL TRANSFERASE SUBUNIT BETA, CHLOROPLASTIC"/>
    <property type="match status" value="1"/>
</dbReference>
<dbReference type="PANTHER" id="PTHR42995:SF5">
    <property type="entry name" value="ACETYL-COENZYME A CARBOXYLASE CARBOXYL TRANSFERASE SUBUNIT BETA, CHLOROPLASTIC"/>
    <property type="match status" value="1"/>
</dbReference>
<dbReference type="Pfam" id="PF01039">
    <property type="entry name" value="Carboxyl_trans"/>
    <property type="match status" value="1"/>
</dbReference>
<dbReference type="PRINTS" id="PR01070">
    <property type="entry name" value="ACCCTRFRASEB"/>
</dbReference>
<dbReference type="SUPFAM" id="SSF52096">
    <property type="entry name" value="ClpP/crotonase"/>
    <property type="match status" value="1"/>
</dbReference>
<dbReference type="PROSITE" id="PS50980">
    <property type="entry name" value="COA_CT_NTER"/>
    <property type="match status" value="1"/>
</dbReference>
<name>ACCD_PHAAO</name>